<comment type="function">
    <text evidence="4">E2 conjugating enzyme that associates with the E3 ubiquitin-protein ligase EL5 to mediate ubiquitination of target proteins.</text>
</comment>
<comment type="catalytic activity">
    <reaction evidence="1 2">
        <text>S-ubiquitinyl-[E1 ubiquitin-activating enzyme]-L-cysteine + [E2 ubiquitin-conjugating enzyme]-L-cysteine = [E1 ubiquitin-activating enzyme]-L-cysteine + S-ubiquitinyl-[E2 ubiquitin-conjugating enzyme]-L-cysteine.</text>
        <dbReference type="EC" id="2.3.2.23"/>
    </reaction>
</comment>
<comment type="pathway">
    <text evidence="1">Protein modification; protein ubiquitination.</text>
</comment>
<comment type="similarity">
    <text evidence="1">Belongs to the ubiquitin-conjugating enzyme family.</text>
</comment>
<name>UBC5A_ORYSJ</name>
<feature type="chain" id="PRO_0000397684" description="Ubiquitin-conjugating enzyme E2 5A">
    <location>
        <begin position="1"/>
        <end position="147"/>
    </location>
</feature>
<feature type="domain" description="UBC core" evidence="1">
    <location>
        <begin position="1"/>
        <end position="147"/>
    </location>
</feature>
<feature type="region of interest" description="Disordered" evidence="3">
    <location>
        <begin position="1"/>
        <end position="24"/>
    </location>
</feature>
<feature type="compositionally biased region" description="Basic and acidic residues" evidence="3">
    <location>
        <begin position="1"/>
        <end position="15"/>
    </location>
</feature>
<feature type="active site" description="Glycyl thioester intermediate" evidence="1 2">
    <location>
        <position position="85"/>
    </location>
</feature>
<proteinExistence type="evidence at transcript level"/>
<keyword id="KW-0067">ATP-binding</keyword>
<keyword id="KW-0547">Nucleotide-binding</keyword>
<keyword id="KW-1185">Reference proteome</keyword>
<keyword id="KW-0808">Transferase</keyword>
<keyword id="KW-0833">Ubl conjugation pathway</keyword>
<gene>
    <name type="primary">UBC5A</name>
    <name type="ordered locus">Os01g0658400</name>
    <name type="ordered locus">LOC_Os01g46926</name>
    <name type="ORF">OsJ_02884</name>
</gene>
<evidence type="ECO:0000255" key="1">
    <source>
        <dbReference type="PROSITE-ProRule" id="PRU00388"/>
    </source>
</evidence>
<evidence type="ECO:0000255" key="2">
    <source>
        <dbReference type="PROSITE-ProRule" id="PRU10133"/>
    </source>
</evidence>
<evidence type="ECO:0000256" key="3">
    <source>
        <dbReference type="SAM" id="MobiDB-lite"/>
    </source>
</evidence>
<evidence type="ECO:0000269" key="4">
    <source>
    </source>
</evidence>
<sequence length="147" mass="16573">MASKRIQKELKDLQKDPPTSCSAGPVGEDMFHWQATIMGPSDSPYAGGVFLVTIHFPPDYPFKPPKVAFRTKVFHPNINSNGSICLDILKDQWSPALTISKVLLSICSLLTDPNPDDPLVPEIAHMYKTDRHKYENTARTWTQRYAM</sequence>
<organism>
    <name type="scientific">Oryza sativa subsp. japonica</name>
    <name type="common">Rice</name>
    <dbReference type="NCBI Taxonomy" id="39947"/>
    <lineage>
        <taxon>Eukaryota</taxon>
        <taxon>Viridiplantae</taxon>
        <taxon>Streptophyta</taxon>
        <taxon>Embryophyta</taxon>
        <taxon>Tracheophyta</taxon>
        <taxon>Spermatophyta</taxon>
        <taxon>Magnoliopsida</taxon>
        <taxon>Liliopsida</taxon>
        <taxon>Poales</taxon>
        <taxon>Poaceae</taxon>
        <taxon>BOP clade</taxon>
        <taxon>Oryzoideae</taxon>
        <taxon>Oryzeae</taxon>
        <taxon>Oryzinae</taxon>
        <taxon>Oryza</taxon>
        <taxon>Oryza sativa</taxon>
    </lineage>
</organism>
<dbReference type="EC" id="2.3.2.23"/>
<dbReference type="EMBL" id="AB074411">
    <property type="protein sequence ID" value="BAB89354.1"/>
    <property type="molecule type" value="mRNA"/>
</dbReference>
<dbReference type="EMBL" id="AP008207">
    <property type="protein sequence ID" value="BAF05677.1"/>
    <property type="molecule type" value="Genomic_DNA"/>
</dbReference>
<dbReference type="EMBL" id="AP014957">
    <property type="protein sequence ID" value="BAS73515.1"/>
    <property type="molecule type" value="Genomic_DNA"/>
</dbReference>
<dbReference type="EMBL" id="CM000138">
    <property type="protein sequence ID" value="EEE55114.1"/>
    <property type="molecule type" value="Genomic_DNA"/>
</dbReference>
<dbReference type="EMBL" id="AK063826">
    <property type="protein sequence ID" value="BAG88879.1"/>
    <property type="molecule type" value="mRNA"/>
</dbReference>
<dbReference type="EMBL" id="AK099284">
    <property type="protein sequence ID" value="BAG94041.1"/>
    <property type="molecule type" value="mRNA"/>
</dbReference>
<dbReference type="RefSeq" id="XP_015650522.1">
    <property type="nucleotide sequence ID" value="XM_015795036.1"/>
</dbReference>
<dbReference type="SMR" id="Q8S920"/>
<dbReference type="FunCoup" id="Q8S920">
    <property type="interactions" value="2389"/>
</dbReference>
<dbReference type="STRING" id="39947.Q8S920"/>
<dbReference type="PaxDb" id="39947-Q8S920"/>
<dbReference type="EnsemblPlants" id="Os01t0658400-01">
    <property type="protein sequence ID" value="Os01t0658400-01"/>
    <property type="gene ID" value="Os01g0658400"/>
</dbReference>
<dbReference type="Gramene" id="Os01t0658400-01">
    <property type="protein sequence ID" value="Os01t0658400-01"/>
    <property type="gene ID" value="Os01g0658400"/>
</dbReference>
<dbReference type="KEGG" id="dosa:Os01g0658400"/>
<dbReference type="eggNOG" id="KOG0417">
    <property type="taxonomic scope" value="Eukaryota"/>
</dbReference>
<dbReference type="HOGENOM" id="CLU_030988_13_4_1"/>
<dbReference type="InParanoid" id="Q8S920"/>
<dbReference type="OMA" id="PNIASMY"/>
<dbReference type="OrthoDB" id="1839788at2759"/>
<dbReference type="PlantReactome" id="R-OSA-5654828">
    <property type="pathway name" value="Strigolactone signaling"/>
</dbReference>
<dbReference type="UniPathway" id="UPA00143"/>
<dbReference type="Proteomes" id="UP000000763">
    <property type="component" value="Chromosome 1"/>
</dbReference>
<dbReference type="Proteomes" id="UP000007752">
    <property type="component" value="Chromosome 1"/>
</dbReference>
<dbReference type="Proteomes" id="UP000059680">
    <property type="component" value="Chromosome 1"/>
</dbReference>
<dbReference type="GO" id="GO:0005634">
    <property type="term" value="C:nucleus"/>
    <property type="evidence" value="ECO:0000318"/>
    <property type="project" value="GO_Central"/>
</dbReference>
<dbReference type="GO" id="GO:0005524">
    <property type="term" value="F:ATP binding"/>
    <property type="evidence" value="ECO:0007669"/>
    <property type="project" value="UniProtKB-KW"/>
</dbReference>
<dbReference type="GO" id="GO:0061631">
    <property type="term" value="F:ubiquitin conjugating enzyme activity"/>
    <property type="evidence" value="ECO:0007669"/>
    <property type="project" value="UniProtKB-EC"/>
</dbReference>
<dbReference type="GO" id="GO:0004842">
    <property type="term" value="F:ubiquitin-protein transferase activity"/>
    <property type="evidence" value="ECO:0000314"/>
    <property type="project" value="UniProtKB"/>
</dbReference>
<dbReference type="GO" id="GO:0000209">
    <property type="term" value="P:protein polyubiquitination"/>
    <property type="evidence" value="ECO:0000318"/>
    <property type="project" value="GO_Central"/>
</dbReference>
<dbReference type="GO" id="GO:0016567">
    <property type="term" value="P:protein ubiquitination"/>
    <property type="evidence" value="ECO:0000314"/>
    <property type="project" value="UniProtKB"/>
</dbReference>
<dbReference type="GO" id="GO:0006511">
    <property type="term" value="P:ubiquitin-dependent protein catabolic process"/>
    <property type="evidence" value="ECO:0000318"/>
    <property type="project" value="GO_Central"/>
</dbReference>
<dbReference type="CDD" id="cd23792">
    <property type="entry name" value="UBCc_UBE2D"/>
    <property type="match status" value="1"/>
</dbReference>
<dbReference type="FunFam" id="3.10.110.10:FF:000001">
    <property type="entry name" value="Ubiquitin-conjugating enzyme 28, E2"/>
    <property type="match status" value="1"/>
</dbReference>
<dbReference type="Gene3D" id="3.10.110.10">
    <property type="entry name" value="Ubiquitin Conjugating Enzyme"/>
    <property type="match status" value="1"/>
</dbReference>
<dbReference type="InterPro" id="IPR000608">
    <property type="entry name" value="UBQ-conjugat_E2_core"/>
</dbReference>
<dbReference type="InterPro" id="IPR023313">
    <property type="entry name" value="UBQ-conjugating_AS"/>
</dbReference>
<dbReference type="InterPro" id="IPR016135">
    <property type="entry name" value="UBQ-conjugating_enzyme/RWD"/>
</dbReference>
<dbReference type="PANTHER" id="PTHR24068">
    <property type="entry name" value="UBIQUITIN-CONJUGATING ENZYME E2"/>
    <property type="match status" value="1"/>
</dbReference>
<dbReference type="Pfam" id="PF00179">
    <property type="entry name" value="UQ_con"/>
    <property type="match status" value="1"/>
</dbReference>
<dbReference type="SMART" id="SM00212">
    <property type="entry name" value="UBCc"/>
    <property type="match status" value="1"/>
</dbReference>
<dbReference type="SUPFAM" id="SSF54495">
    <property type="entry name" value="UBC-like"/>
    <property type="match status" value="1"/>
</dbReference>
<dbReference type="PROSITE" id="PS00183">
    <property type="entry name" value="UBC_1"/>
    <property type="match status" value="1"/>
</dbReference>
<dbReference type="PROSITE" id="PS50127">
    <property type="entry name" value="UBC_2"/>
    <property type="match status" value="1"/>
</dbReference>
<protein>
    <recommendedName>
        <fullName>Ubiquitin-conjugating enzyme E2 5A</fullName>
        <ecNumber>2.3.2.23</ecNumber>
    </recommendedName>
    <alternativeName>
        <fullName>E2 ubiquitin-conjugating enzyme 5A</fullName>
    </alternativeName>
    <alternativeName>
        <fullName>Ubiquitin carrier protein 5a</fullName>
        <shortName>OsUBC5a</shortName>
    </alternativeName>
    <alternativeName>
        <fullName>Ubiquitin-protein ligase 5A</fullName>
    </alternativeName>
</protein>
<reference key="1">
    <citation type="journal article" date="2002" name="Plant J.">
        <title>EL5, a rice N-acetylchitooligosaccharide elicitor-responsive RING-H2 finger protein, is a ubiquitin ligase which functions in vitro in co-operation with an elicitor-responsive ubiquitin-conjugating enzyme, OsUBC5b.</title>
        <authorList>
            <person name="Takai R."/>
            <person name="Matsuda N."/>
            <person name="Nakano A."/>
            <person name="Hasegawa K."/>
            <person name="Akimoto C."/>
            <person name="Shibuya N."/>
            <person name="Minami E."/>
        </authorList>
    </citation>
    <scope>NUCLEOTIDE SEQUENCE [MRNA]</scope>
    <scope>FUNCTION</scope>
    <source>
        <strain>cv. Nipponbare</strain>
    </source>
</reference>
<reference key="2">
    <citation type="journal article" date="2005" name="Nature">
        <title>The map-based sequence of the rice genome.</title>
        <authorList>
            <consortium name="International rice genome sequencing project (IRGSP)"/>
        </authorList>
    </citation>
    <scope>NUCLEOTIDE SEQUENCE [LARGE SCALE GENOMIC DNA]</scope>
    <source>
        <strain>cv. Nipponbare</strain>
    </source>
</reference>
<reference key="3">
    <citation type="journal article" date="2008" name="Nucleic Acids Res.">
        <title>The rice annotation project database (RAP-DB): 2008 update.</title>
        <authorList>
            <consortium name="The rice annotation project (RAP)"/>
        </authorList>
    </citation>
    <scope>GENOME REANNOTATION</scope>
    <source>
        <strain>cv. Nipponbare</strain>
    </source>
</reference>
<reference key="4">
    <citation type="journal article" date="2013" name="Rice">
        <title>Improvement of the Oryza sativa Nipponbare reference genome using next generation sequence and optical map data.</title>
        <authorList>
            <person name="Kawahara Y."/>
            <person name="de la Bastide M."/>
            <person name="Hamilton J.P."/>
            <person name="Kanamori H."/>
            <person name="McCombie W.R."/>
            <person name="Ouyang S."/>
            <person name="Schwartz D.C."/>
            <person name="Tanaka T."/>
            <person name="Wu J."/>
            <person name="Zhou S."/>
            <person name="Childs K.L."/>
            <person name="Davidson R.M."/>
            <person name="Lin H."/>
            <person name="Quesada-Ocampo L."/>
            <person name="Vaillancourt B."/>
            <person name="Sakai H."/>
            <person name="Lee S.S."/>
            <person name="Kim J."/>
            <person name="Numa H."/>
            <person name="Itoh T."/>
            <person name="Buell C.R."/>
            <person name="Matsumoto T."/>
        </authorList>
    </citation>
    <scope>GENOME REANNOTATION</scope>
    <source>
        <strain>cv. Nipponbare</strain>
    </source>
</reference>
<reference key="5">
    <citation type="journal article" date="2005" name="PLoS Biol.">
        <title>The genomes of Oryza sativa: a history of duplications.</title>
        <authorList>
            <person name="Yu J."/>
            <person name="Wang J."/>
            <person name="Lin W."/>
            <person name="Li S."/>
            <person name="Li H."/>
            <person name="Zhou J."/>
            <person name="Ni P."/>
            <person name="Dong W."/>
            <person name="Hu S."/>
            <person name="Zeng C."/>
            <person name="Zhang J."/>
            <person name="Zhang Y."/>
            <person name="Li R."/>
            <person name="Xu Z."/>
            <person name="Li S."/>
            <person name="Li X."/>
            <person name="Zheng H."/>
            <person name="Cong L."/>
            <person name="Lin L."/>
            <person name="Yin J."/>
            <person name="Geng J."/>
            <person name="Li G."/>
            <person name="Shi J."/>
            <person name="Liu J."/>
            <person name="Lv H."/>
            <person name="Li J."/>
            <person name="Wang J."/>
            <person name="Deng Y."/>
            <person name="Ran L."/>
            <person name="Shi X."/>
            <person name="Wang X."/>
            <person name="Wu Q."/>
            <person name="Li C."/>
            <person name="Ren X."/>
            <person name="Wang J."/>
            <person name="Wang X."/>
            <person name="Li D."/>
            <person name="Liu D."/>
            <person name="Zhang X."/>
            <person name="Ji Z."/>
            <person name="Zhao W."/>
            <person name="Sun Y."/>
            <person name="Zhang Z."/>
            <person name="Bao J."/>
            <person name="Han Y."/>
            <person name="Dong L."/>
            <person name="Ji J."/>
            <person name="Chen P."/>
            <person name="Wu S."/>
            <person name="Liu J."/>
            <person name="Xiao Y."/>
            <person name="Bu D."/>
            <person name="Tan J."/>
            <person name="Yang L."/>
            <person name="Ye C."/>
            <person name="Zhang J."/>
            <person name="Xu J."/>
            <person name="Zhou Y."/>
            <person name="Yu Y."/>
            <person name="Zhang B."/>
            <person name="Zhuang S."/>
            <person name="Wei H."/>
            <person name="Liu B."/>
            <person name="Lei M."/>
            <person name="Yu H."/>
            <person name="Li Y."/>
            <person name="Xu H."/>
            <person name="Wei S."/>
            <person name="He X."/>
            <person name="Fang L."/>
            <person name="Zhang Z."/>
            <person name="Zhang Y."/>
            <person name="Huang X."/>
            <person name="Su Z."/>
            <person name="Tong W."/>
            <person name="Li J."/>
            <person name="Tong Z."/>
            <person name="Li S."/>
            <person name="Ye J."/>
            <person name="Wang L."/>
            <person name="Fang L."/>
            <person name="Lei T."/>
            <person name="Chen C.-S."/>
            <person name="Chen H.-C."/>
            <person name="Xu Z."/>
            <person name="Li H."/>
            <person name="Huang H."/>
            <person name="Zhang F."/>
            <person name="Xu H."/>
            <person name="Li N."/>
            <person name="Zhao C."/>
            <person name="Li S."/>
            <person name="Dong L."/>
            <person name="Huang Y."/>
            <person name="Li L."/>
            <person name="Xi Y."/>
            <person name="Qi Q."/>
            <person name="Li W."/>
            <person name="Zhang B."/>
            <person name="Hu W."/>
            <person name="Zhang Y."/>
            <person name="Tian X."/>
            <person name="Jiao Y."/>
            <person name="Liang X."/>
            <person name="Jin J."/>
            <person name="Gao L."/>
            <person name="Zheng W."/>
            <person name="Hao B."/>
            <person name="Liu S.-M."/>
            <person name="Wang W."/>
            <person name="Yuan L."/>
            <person name="Cao M."/>
            <person name="McDermott J."/>
            <person name="Samudrala R."/>
            <person name="Wang J."/>
            <person name="Wong G.K.-S."/>
            <person name="Yang H."/>
        </authorList>
    </citation>
    <scope>NUCLEOTIDE SEQUENCE [LARGE SCALE GENOMIC DNA]</scope>
    <source>
        <strain>cv. Nipponbare</strain>
    </source>
</reference>
<reference key="6">
    <citation type="journal article" date="2003" name="Science">
        <title>Collection, mapping, and annotation of over 28,000 cDNA clones from japonica rice.</title>
        <authorList>
            <consortium name="The rice full-length cDNA consortium"/>
        </authorList>
    </citation>
    <scope>NUCLEOTIDE SEQUENCE [LARGE SCALE MRNA]</scope>
    <source>
        <strain>cv. Nipponbare</strain>
    </source>
</reference>
<accession>Q8S920</accession>
<accession>A0A0P0V661</accession>